<sequence length="156" mass="17371">MWKRPDPQAKIKAGDRPQTCQSLALGSATESALPQALKLSDFQNFSVFEDISQHIKEVGAQLVKKVNAIFQLDITKDGKTILQWTIDLKNGAGDMYLGSARLPADTVFIIPDSVFTELVVGKINPQKAFLAGKFKVRGKVLLSQKLERIFREWAKI</sequence>
<dbReference type="EMBL" id="AK005847">
    <property type="protein sequence ID" value="BAB24272.2"/>
    <property type="status" value="ALT_INIT"/>
    <property type="molecule type" value="mRNA"/>
</dbReference>
<dbReference type="EMBL" id="AL808106">
    <property type="status" value="NOT_ANNOTATED_CDS"/>
    <property type="molecule type" value="Genomic_DNA"/>
</dbReference>
<dbReference type="EMBL" id="BC048653">
    <property type="protein sequence ID" value="AAH48653.1"/>
    <property type="molecule type" value="mRNA"/>
</dbReference>
<dbReference type="CCDS" id="CCDS38255.1"/>
<dbReference type="RefSeq" id="NP_079766.3">
    <property type="nucleotide sequence ID" value="NM_025490.2"/>
</dbReference>
<dbReference type="SMR" id="Q9DAH1"/>
<dbReference type="FunCoup" id="Q9DAH1">
    <property type="interactions" value="7"/>
</dbReference>
<dbReference type="STRING" id="10090.ENSMUSP00000028918"/>
<dbReference type="PaxDb" id="10090-ENSMUSP00000028918"/>
<dbReference type="ProteomicsDB" id="256756"/>
<dbReference type="Antibodypedia" id="24632">
    <property type="antibodies" value="76 antibodies from 10 providers"/>
</dbReference>
<dbReference type="DNASU" id="66328"/>
<dbReference type="Ensembl" id="ENSMUST00000028918.4">
    <property type="protein sequence ID" value="ENSMUSP00000028918.3"/>
    <property type="gene ID" value="ENSMUSG00000027431.6"/>
</dbReference>
<dbReference type="GeneID" id="66328"/>
<dbReference type="KEGG" id="mmu:66328"/>
<dbReference type="UCSC" id="uc008mrp.1">
    <property type="organism name" value="mouse"/>
</dbReference>
<dbReference type="AGR" id="MGI:1913578"/>
<dbReference type="CTD" id="140856"/>
<dbReference type="MGI" id="MGI:1913578">
    <property type="gene designation" value="Scp2d1"/>
</dbReference>
<dbReference type="VEuPathDB" id="HostDB:ENSMUSG00000027431"/>
<dbReference type="eggNOG" id="KOG4170">
    <property type="taxonomic scope" value="Eukaryota"/>
</dbReference>
<dbReference type="GeneTree" id="ENSGT00940000154327"/>
<dbReference type="HOGENOM" id="CLU_105945_3_1_1"/>
<dbReference type="InParanoid" id="Q9DAH1"/>
<dbReference type="OMA" id="WDIMNGG"/>
<dbReference type="OrthoDB" id="3592703at2759"/>
<dbReference type="PhylomeDB" id="Q9DAH1"/>
<dbReference type="TreeFam" id="TF343860"/>
<dbReference type="BioGRID-ORCS" id="66328">
    <property type="hits" value="4 hits in 76 CRISPR screens"/>
</dbReference>
<dbReference type="PRO" id="PR:Q9DAH1"/>
<dbReference type="Proteomes" id="UP000000589">
    <property type="component" value="Chromosome 2"/>
</dbReference>
<dbReference type="RNAct" id="Q9DAH1">
    <property type="molecule type" value="protein"/>
</dbReference>
<dbReference type="Bgee" id="ENSMUSG00000027431">
    <property type="expression patterns" value="Expressed in spermatid and 5 other cell types or tissues"/>
</dbReference>
<dbReference type="FunFam" id="3.30.1050.10:FF:000001">
    <property type="entry name" value="Putative Non-specific lipid-transfer protein"/>
    <property type="match status" value="1"/>
</dbReference>
<dbReference type="Gene3D" id="3.30.1050.10">
    <property type="entry name" value="SCP2 sterol-binding domain"/>
    <property type="match status" value="1"/>
</dbReference>
<dbReference type="InterPro" id="IPR003033">
    <property type="entry name" value="SCP2_sterol-bd_dom"/>
</dbReference>
<dbReference type="InterPro" id="IPR036527">
    <property type="entry name" value="SCP2_sterol-bd_dom_sf"/>
</dbReference>
<dbReference type="PANTHER" id="PTHR10094:SF25">
    <property type="entry name" value="SCP2 STEROL-BINDING DOMAIN-CONTAINING PROTEIN 1"/>
    <property type="match status" value="1"/>
</dbReference>
<dbReference type="PANTHER" id="PTHR10094">
    <property type="entry name" value="STEROL CARRIER PROTEIN 2 SCP-2 FAMILY PROTEIN"/>
    <property type="match status" value="1"/>
</dbReference>
<dbReference type="Pfam" id="PF02036">
    <property type="entry name" value="SCP2"/>
    <property type="match status" value="1"/>
</dbReference>
<dbReference type="SUPFAM" id="SSF55718">
    <property type="entry name" value="SCP-like"/>
    <property type="match status" value="1"/>
</dbReference>
<accession>Q9DAH1</accession>
<accession>Q5RL24</accession>
<feature type="chain" id="PRO_0000079445" description="SCP2 sterol-binding domain-containing protein 1">
    <location>
        <begin position="1"/>
        <end position="156"/>
    </location>
</feature>
<feature type="domain" description="SCP2">
    <location>
        <begin position="44"/>
        <end position="156"/>
    </location>
</feature>
<feature type="sequence conflict" description="In Ref. 1; BAB24272." evidence="1" ref="1">
    <original>A</original>
    <variation>V</variation>
    <location>
        <position position="9"/>
    </location>
</feature>
<proteinExistence type="evidence at transcript level"/>
<reference key="1">
    <citation type="journal article" date="2005" name="Science">
        <title>The transcriptional landscape of the mammalian genome.</title>
        <authorList>
            <person name="Carninci P."/>
            <person name="Kasukawa T."/>
            <person name="Katayama S."/>
            <person name="Gough J."/>
            <person name="Frith M.C."/>
            <person name="Maeda N."/>
            <person name="Oyama R."/>
            <person name="Ravasi T."/>
            <person name="Lenhard B."/>
            <person name="Wells C."/>
            <person name="Kodzius R."/>
            <person name="Shimokawa K."/>
            <person name="Bajic V.B."/>
            <person name="Brenner S.E."/>
            <person name="Batalov S."/>
            <person name="Forrest A.R."/>
            <person name="Zavolan M."/>
            <person name="Davis M.J."/>
            <person name="Wilming L.G."/>
            <person name="Aidinis V."/>
            <person name="Allen J.E."/>
            <person name="Ambesi-Impiombato A."/>
            <person name="Apweiler R."/>
            <person name="Aturaliya R.N."/>
            <person name="Bailey T.L."/>
            <person name="Bansal M."/>
            <person name="Baxter L."/>
            <person name="Beisel K.W."/>
            <person name="Bersano T."/>
            <person name="Bono H."/>
            <person name="Chalk A.M."/>
            <person name="Chiu K.P."/>
            <person name="Choudhary V."/>
            <person name="Christoffels A."/>
            <person name="Clutterbuck D.R."/>
            <person name="Crowe M.L."/>
            <person name="Dalla E."/>
            <person name="Dalrymple B.P."/>
            <person name="de Bono B."/>
            <person name="Della Gatta G."/>
            <person name="di Bernardo D."/>
            <person name="Down T."/>
            <person name="Engstrom P."/>
            <person name="Fagiolini M."/>
            <person name="Faulkner G."/>
            <person name="Fletcher C.F."/>
            <person name="Fukushima T."/>
            <person name="Furuno M."/>
            <person name="Futaki S."/>
            <person name="Gariboldi M."/>
            <person name="Georgii-Hemming P."/>
            <person name="Gingeras T.R."/>
            <person name="Gojobori T."/>
            <person name="Green R.E."/>
            <person name="Gustincich S."/>
            <person name="Harbers M."/>
            <person name="Hayashi Y."/>
            <person name="Hensch T.K."/>
            <person name="Hirokawa N."/>
            <person name="Hill D."/>
            <person name="Huminiecki L."/>
            <person name="Iacono M."/>
            <person name="Ikeo K."/>
            <person name="Iwama A."/>
            <person name="Ishikawa T."/>
            <person name="Jakt M."/>
            <person name="Kanapin A."/>
            <person name="Katoh M."/>
            <person name="Kawasawa Y."/>
            <person name="Kelso J."/>
            <person name="Kitamura H."/>
            <person name="Kitano H."/>
            <person name="Kollias G."/>
            <person name="Krishnan S.P."/>
            <person name="Kruger A."/>
            <person name="Kummerfeld S.K."/>
            <person name="Kurochkin I.V."/>
            <person name="Lareau L.F."/>
            <person name="Lazarevic D."/>
            <person name="Lipovich L."/>
            <person name="Liu J."/>
            <person name="Liuni S."/>
            <person name="McWilliam S."/>
            <person name="Madan Babu M."/>
            <person name="Madera M."/>
            <person name="Marchionni L."/>
            <person name="Matsuda H."/>
            <person name="Matsuzawa S."/>
            <person name="Miki H."/>
            <person name="Mignone F."/>
            <person name="Miyake S."/>
            <person name="Morris K."/>
            <person name="Mottagui-Tabar S."/>
            <person name="Mulder N."/>
            <person name="Nakano N."/>
            <person name="Nakauchi H."/>
            <person name="Ng P."/>
            <person name="Nilsson R."/>
            <person name="Nishiguchi S."/>
            <person name="Nishikawa S."/>
            <person name="Nori F."/>
            <person name="Ohara O."/>
            <person name="Okazaki Y."/>
            <person name="Orlando V."/>
            <person name="Pang K.C."/>
            <person name="Pavan W.J."/>
            <person name="Pavesi G."/>
            <person name="Pesole G."/>
            <person name="Petrovsky N."/>
            <person name="Piazza S."/>
            <person name="Reed J."/>
            <person name="Reid J.F."/>
            <person name="Ring B.Z."/>
            <person name="Ringwald M."/>
            <person name="Rost B."/>
            <person name="Ruan Y."/>
            <person name="Salzberg S.L."/>
            <person name="Sandelin A."/>
            <person name="Schneider C."/>
            <person name="Schoenbach C."/>
            <person name="Sekiguchi K."/>
            <person name="Semple C.A."/>
            <person name="Seno S."/>
            <person name="Sessa L."/>
            <person name="Sheng Y."/>
            <person name="Shibata Y."/>
            <person name="Shimada H."/>
            <person name="Shimada K."/>
            <person name="Silva D."/>
            <person name="Sinclair B."/>
            <person name="Sperling S."/>
            <person name="Stupka E."/>
            <person name="Sugiura K."/>
            <person name="Sultana R."/>
            <person name="Takenaka Y."/>
            <person name="Taki K."/>
            <person name="Tammoja K."/>
            <person name="Tan S.L."/>
            <person name="Tang S."/>
            <person name="Taylor M.S."/>
            <person name="Tegner J."/>
            <person name="Teichmann S.A."/>
            <person name="Ueda H.R."/>
            <person name="van Nimwegen E."/>
            <person name="Verardo R."/>
            <person name="Wei C.L."/>
            <person name="Yagi K."/>
            <person name="Yamanishi H."/>
            <person name="Zabarovsky E."/>
            <person name="Zhu S."/>
            <person name="Zimmer A."/>
            <person name="Hide W."/>
            <person name="Bult C."/>
            <person name="Grimmond S.M."/>
            <person name="Teasdale R.D."/>
            <person name="Liu E.T."/>
            <person name="Brusic V."/>
            <person name="Quackenbush J."/>
            <person name="Wahlestedt C."/>
            <person name="Mattick J.S."/>
            <person name="Hume D.A."/>
            <person name="Kai C."/>
            <person name="Sasaki D."/>
            <person name="Tomaru Y."/>
            <person name="Fukuda S."/>
            <person name="Kanamori-Katayama M."/>
            <person name="Suzuki M."/>
            <person name="Aoki J."/>
            <person name="Arakawa T."/>
            <person name="Iida J."/>
            <person name="Imamura K."/>
            <person name="Itoh M."/>
            <person name="Kato T."/>
            <person name="Kawaji H."/>
            <person name="Kawagashira N."/>
            <person name="Kawashima T."/>
            <person name="Kojima M."/>
            <person name="Kondo S."/>
            <person name="Konno H."/>
            <person name="Nakano K."/>
            <person name="Ninomiya N."/>
            <person name="Nishio T."/>
            <person name="Okada M."/>
            <person name="Plessy C."/>
            <person name="Shibata K."/>
            <person name="Shiraki T."/>
            <person name="Suzuki S."/>
            <person name="Tagami M."/>
            <person name="Waki K."/>
            <person name="Watahiki A."/>
            <person name="Okamura-Oho Y."/>
            <person name="Suzuki H."/>
            <person name="Kawai J."/>
            <person name="Hayashizaki Y."/>
        </authorList>
    </citation>
    <scope>NUCLEOTIDE SEQUENCE [LARGE SCALE MRNA]</scope>
    <source>
        <strain>C57BL/6J</strain>
        <tissue>Testis</tissue>
    </source>
</reference>
<reference key="2">
    <citation type="journal article" date="2009" name="PLoS Biol.">
        <title>Lineage-specific biology revealed by a finished genome assembly of the mouse.</title>
        <authorList>
            <person name="Church D.M."/>
            <person name="Goodstadt L."/>
            <person name="Hillier L.W."/>
            <person name="Zody M.C."/>
            <person name="Goldstein S."/>
            <person name="She X."/>
            <person name="Bult C.J."/>
            <person name="Agarwala R."/>
            <person name="Cherry J.L."/>
            <person name="DiCuccio M."/>
            <person name="Hlavina W."/>
            <person name="Kapustin Y."/>
            <person name="Meric P."/>
            <person name="Maglott D."/>
            <person name="Birtle Z."/>
            <person name="Marques A.C."/>
            <person name="Graves T."/>
            <person name="Zhou S."/>
            <person name="Teague B."/>
            <person name="Potamousis K."/>
            <person name="Churas C."/>
            <person name="Place M."/>
            <person name="Herschleb J."/>
            <person name="Runnheim R."/>
            <person name="Forrest D."/>
            <person name="Amos-Landgraf J."/>
            <person name="Schwartz D.C."/>
            <person name="Cheng Z."/>
            <person name="Lindblad-Toh K."/>
            <person name="Eichler E.E."/>
            <person name="Ponting C.P."/>
        </authorList>
    </citation>
    <scope>NUCLEOTIDE SEQUENCE [LARGE SCALE GENOMIC DNA]</scope>
    <source>
        <strain>C57BL/6J</strain>
    </source>
</reference>
<reference key="3">
    <citation type="journal article" date="2004" name="Genome Res.">
        <title>The status, quality, and expansion of the NIH full-length cDNA project: the Mammalian Gene Collection (MGC).</title>
        <authorList>
            <consortium name="The MGC Project Team"/>
        </authorList>
    </citation>
    <scope>NUCLEOTIDE SEQUENCE [LARGE SCALE MRNA]</scope>
    <source>
        <tissue>Testis</tissue>
    </source>
</reference>
<evidence type="ECO:0000305" key="1"/>
<gene>
    <name type="primary">Scp2d1</name>
</gene>
<keyword id="KW-1185">Reference proteome</keyword>
<organism>
    <name type="scientific">Mus musculus</name>
    <name type="common">Mouse</name>
    <dbReference type="NCBI Taxonomy" id="10090"/>
    <lineage>
        <taxon>Eukaryota</taxon>
        <taxon>Metazoa</taxon>
        <taxon>Chordata</taxon>
        <taxon>Craniata</taxon>
        <taxon>Vertebrata</taxon>
        <taxon>Euteleostomi</taxon>
        <taxon>Mammalia</taxon>
        <taxon>Eutheria</taxon>
        <taxon>Euarchontoglires</taxon>
        <taxon>Glires</taxon>
        <taxon>Rodentia</taxon>
        <taxon>Myomorpha</taxon>
        <taxon>Muroidea</taxon>
        <taxon>Muridae</taxon>
        <taxon>Murinae</taxon>
        <taxon>Mus</taxon>
        <taxon>Mus</taxon>
    </lineage>
</organism>
<comment type="sequence caution" evidence="1">
    <conflict type="erroneous initiation">
        <sequence resource="EMBL-CDS" id="BAB24272"/>
    </conflict>
    <text>Extended N-terminus.</text>
</comment>
<protein>
    <recommendedName>
        <fullName>SCP2 sterol-binding domain-containing protein 1</fullName>
    </recommendedName>
</protein>
<name>SCP2D_MOUSE</name>